<name>ACP_AFIC5</name>
<proteinExistence type="inferred from homology"/>
<organism>
    <name type="scientific">Afipia carboxidovorans (strain ATCC 49405 / DSM 1227 / KCTC 32145 / OM5)</name>
    <name type="common">Oligotropha carboxidovorans</name>
    <dbReference type="NCBI Taxonomy" id="504832"/>
    <lineage>
        <taxon>Bacteria</taxon>
        <taxon>Pseudomonadati</taxon>
        <taxon>Pseudomonadota</taxon>
        <taxon>Alphaproteobacteria</taxon>
        <taxon>Hyphomicrobiales</taxon>
        <taxon>Nitrobacteraceae</taxon>
        <taxon>Afipia</taxon>
    </lineage>
</organism>
<protein>
    <recommendedName>
        <fullName evidence="1">Acyl carrier protein</fullName>
        <shortName evidence="1">ACP</shortName>
    </recommendedName>
</protein>
<feature type="chain" id="PRO_1000139046" description="Acyl carrier protein">
    <location>
        <begin position="1"/>
        <end position="79"/>
    </location>
</feature>
<feature type="domain" description="Carrier" evidence="2">
    <location>
        <begin position="2"/>
        <end position="77"/>
    </location>
</feature>
<feature type="modified residue" description="O-(pantetheine 4'-phosphoryl)serine" evidence="2">
    <location>
        <position position="37"/>
    </location>
</feature>
<evidence type="ECO:0000255" key="1">
    <source>
        <dbReference type="HAMAP-Rule" id="MF_01217"/>
    </source>
</evidence>
<evidence type="ECO:0000255" key="2">
    <source>
        <dbReference type="PROSITE-ProRule" id="PRU00258"/>
    </source>
</evidence>
<dbReference type="EMBL" id="CP001196">
    <property type="protein sequence ID" value="ACI93480.1"/>
    <property type="molecule type" value="Genomic_DNA"/>
</dbReference>
<dbReference type="EMBL" id="CP002826">
    <property type="protein sequence ID" value="AEI06390.1"/>
    <property type="molecule type" value="Genomic_DNA"/>
</dbReference>
<dbReference type="RefSeq" id="WP_012563506.1">
    <property type="nucleotide sequence ID" value="NC_015684.1"/>
</dbReference>
<dbReference type="SMR" id="B6JGN3"/>
<dbReference type="STRING" id="504832.OCA5_c16760"/>
<dbReference type="KEGG" id="oca:OCAR_6367"/>
<dbReference type="KEGG" id="ocg:OCA5_c16760"/>
<dbReference type="PATRIC" id="fig|504832.7.peg.1789"/>
<dbReference type="eggNOG" id="COG0236">
    <property type="taxonomic scope" value="Bacteria"/>
</dbReference>
<dbReference type="HOGENOM" id="CLU_108696_5_1_5"/>
<dbReference type="OrthoDB" id="9804551at2"/>
<dbReference type="UniPathway" id="UPA00094"/>
<dbReference type="Proteomes" id="UP000007730">
    <property type="component" value="Chromosome"/>
</dbReference>
<dbReference type="GO" id="GO:0005829">
    <property type="term" value="C:cytosol"/>
    <property type="evidence" value="ECO:0007669"/>
    <property type="project" value="TreeGrafter"/>
</dbReference>
<dbReference type="GO" id="GO:0016020">
    <property type="term" value="C:membrane"/>
    <property type="evidence" value="ECO:0007669"/>
    <property type="project" value="GOC"/>
</dbReference>
<dbReference type="GO" id="GO:0000035">
    <property type="term" value="F:acyl binding"/>
    <property type="evidence" value="ECO:0007669"/>
    <property type="project" value="TreeGrafter"/>
</dbReference>
<dbReference type="GO" id="GO:0000036">
    <property type="term" value="F:acyl carrier activity"/>
    <property type="evidence" value="ECO:0007669"/>
    <property type="project" value="UniProtKB-UniRule"/>
</dbReference>
<dbReference type="GO" id="GO:0009245">
    <property type="term" value="P:lipid A biosynthetic process"/>
    <property type="evidence" value="ECO:0007669"/>
    <property type="project" value="TreeGrafter"/>
</dbReference>
<dbReference type="FunFam" id="1.10.1200.10:FF:000012">
    <property type="entry name" value="Acyl carrier protein"/>
    <property type="match status" value="1"/>
</dbReference>
<dbReference type="Gene3D" id="1.10.1200.10">
    <property type="entry name" value="ACP-like"/>
    <property type="match status" value="1"/>
</dbReference>
<dbReference type="HAMAP" id="MF_01217">
    <property type="entry name" value="Acyl_carrier"/>
    <property type="match status" value="1"/>
</dbReference>
<dbReference type="InterPro" id="IPR003231">
    <property type="entry name" value="ACP"/>
</dbReference>
<dbReference type="InterPro" id="IPR036736">
    <property type="entry name" value="ACP-like_sf"/>
</dbReference>
<dbReference type="InterPro" id="IPR009081">
    <property type="entry name" value="PP-bd_ACP"/>
</dbReference>
<dbReference type="InterPro" id="IPR006162">
    <property type="entry name" value="Ppantetheine_attach_site"/>
</dbReference>
<dbReference type="NCBIfam" id="TIGR00517">
    <property type="entry name" value="acyl_carrier"/>
    <property type="match status" value="1"/>
</dbReference>
<dbReference type="NCBIfam" id="NF002148">
    <property type="entry name" value="PRK00982.1-2"/>
    <property type="match status" value="1"/>
</dbReference>
<dbReference type="NCBIfam" id="NF002149">
    <property type="entry name" value="PRK00982.1-3"/>
    <property type="match status" value="1"/>
</dbReference>
<dbReference type="NCBIfam" id="NF002150">
    <property type="entry name" value="PRK00982.1-4"/>
    <property type="match status" value="1"/>
</dbReference>
<dbReference type="NCBIfam" id="NF002151">
    <property type="entry name" value="PRK00982.1-5"/>
    <property type="match status" value="1"/>
</dbReference>
<dbReference type="PANTHER" id="PTHR20863">
    <property type="entry name" value="ACYL CARRIER PROTEIN"/>
    <property type="match status" value="1"/>
</dbReference>
<dbReference type="PANTHER" id="PTHR20863:SF76">
    <property type="entry name" value="CARRIER DOMAIN-CONTAINING PROTEIN"/>
    <property type="match status" value="1"/>
</dbReference>
<dbReference type="Pfam" id="PF00550">
    <property type="entry name" value="PP-binding"/>
    <property type="match status" value="1"/>
</dbReference>
<dbReference type="SUPFAM" id="SSF47336">
    <property type="entry name" value="ACP-like"/>
    <property type="match status" value="1"/>
</dbReference>
<dbReference type="PROSITE" id="PS50075">
    <property type="entry name" value="CARRIER"/>
    <property type="match status" value="1"/>
</dbReference>
<dbReference type="PROSITE" id="PS00012">
    <property type="entry name" value="PHOSPHOPANTETHEINE"/>
    <property type="match status" value="1"/>
</dbReference>
<reference key="1">
    <citation type="journal article" date="2008" name="J. Bacteriol.">
        <title>Genome sequence of the chemolithoautotrophic bacterium Oligotropha carboxidovorans OM5T.</title>
        <authorList>
            <person name="Paul D."/>
            <person name="Bridges S."/>
            <person name="Burgess S.C."/>
            <person name="Dandass Y."/>
            <person name="Lawrence M.L."/>
        </authorList>
    </citation>
    <scope>NUCLEOTIDE SEQUENCE [LARGE SCALE GENOMIC DNA]</scope>
    <source>
        <strain>ATCC 49405 / DSM 1227 / KCTC 32145 / OM5</strain>
    </source>
</reference>
<reference key="2">
    <citation type="journal article" date="2011" name="J. Bacteriol.">
        <title>Complete genome sequences of the chemolithoautotrophic Oligotropha carboxidovorans strains OM4 and OM5.</title>
        <authorList>
            <person name="Volland S."/>
            <person name="Rachinger M."/>
            <person name="Strittmatter A."/>
            <person name="Daniel R."/>
            <person name="Gottschalk G."/>
            <person name="Meyer O."/>
        </authorList>
    </citation>
    <scope>NUCLEOTIDE SEQUENCE [LARGE SCALE GENOMIC DNA]</scope>
    <source>
        <strain>ATCC 49405 / DSM 1227 / KCTC 32145 / OM5</strain>
    </source>
</reference>
<gene>
    <name evidence="1" type="primary">acpP</name>
    <name type="ordered locus">OCAR_6367</name>
    <name type="ordered locus">OCA5_c16760</name>
</gene>
<accession>B6JGN3</accession>
<accession>F8C0L4</accession>
<comment type="function">
    <text evidence="1">Carrier of the growing fatty acid chain in fatty acid biosynthesis.</text>
</comment>
<comment type="pathway">
    <text evidence="1">Lipid metabolism; fatty acid biosynthesis.</text>
</comment>
<comment type="subcellular location">
    <subcellularLocation>
        <location evidence="1">Cytoplasm</location>
    </subcellularLocation>
</comment>
<comment type="PTM">
    <text evidence="1">4'-phosphopantetheine is transferred from CoA to a specific serine of apo-ACP by AcpS. This modification is essential for activity because fatty acids are bound in thioester linkage to the sulfhydryl of the prosthetic group.</text>
</comment>
<comment type="similarity">
    <text evidence="1">Belongs to the acyl carrier protein (ACP) family.</text>
</comment>
<sequence>MSEIGERVKKIVVEHLGVEPEKVVETASFIDDLGADSLDTVELVMAFEEEFGCEIPDDAAETILTVGDATKFLEKNAKS</sequence>
<keyword id="KW-0963">Cytoplasm</keyword>
<keyword id="KW-0275">Fatty acid biosynthesis</keyword>
<keyword id="KW-0276">Fatty acid metabolism</keyword>
<keyword id="KW-0444">Lipid biosynthesis</keyword>
<keyword id="KW-0443">Lipid metabolism</keyword>
<keyword id="KW-0596">Phosphopantetheine</keyword>
<keyword id="KW-0597">Phosphoprotein</keyword>
<keyword id="KW-1185">Reference proteome</keyword>